<reference key="1">
    <citation type="journal article" date="2011" name="Nature">
        <title>The Medicago genome provides insight into the evolution of rhizobial symbioses.</title>
        <authorList>
            <person name="Young N.D."/>
            <person name="Debelle F."/>
            <person name="Oldroyd G.E.D."/>
            <person name="Geurts R."/>
            <person name="Cannon S.B."/>
            <person name="Udvardi M.K."/>
            <person name="Benedito V.A."/>
            <person name="Mayer K.F.X."/>
            <person name="Gouzy J."/>
            <person name="Schoof H."/>
            <person name="Van de Peer Y."/>
            <person name="Proost S."/>
            <person name="Cook D.R."/>
            <person name="Meyers B.C."/>
            <person name="Spannagl M."/>
            <person name="Cheung F."/>
            <person name="De Mita S."/>
            <person name="Krishnakumar V."/>
            <person name="Gundlach H."/>
            <person name="Zhou S."/>
            <person name="Mudge J."/>
            <person name="Bharti A.K."/>
            <person name="Murray J.D."/>
            <person name="Naoumkina M.A."/>
            <person name="Rosen B."/>
            <person name="Silverstein K.A.T."/>
            <person name="Tang H."/>
            <person name="Rombauts S."/>
            <person name="Zhao P.X."/>
            <person name="Zhou P."/>
            <person name="Barbe V."/>
            <person name="Bardou P."/>
            <person name="Bechner M."/>
            <person name="Bellec A."/>
            <person name="Berger A."/>
            <person name="Berges H."/>
            <person name="Bidwell S."/>
            <person name="Bisseling T."/>
            <person name="Choisne N."/>
            <person name="Couloux A."/>
            <person name="Denny R."/>
            <person name="Deshpande S."/>
            <person name="Dai X."/>
            <person name="Doyle J.J."/>
            <person name="Dudez A.-M."/>
            <person name="Farmer A.D."/>
            <person name="Fouteau S."/>
            <person name="Franken C."/>
            <person name="Gibelin C."/>
            <person name="Gish J."/>
            <person name="Goldstein S."/>
            <person name="Gonzalez A.J."/>
            <person name="Green P.J."/>
            <person name="Hallab A."/>
            <person name="Hartog M."/>
            <person name="Hua A."/>
            <person name="Humphray S.J."/>
            <person name="Jeong D.-H."/>
            <person name="Jing Y."/>
            <person name="Jocker A."/>
            <person name="Kenton S.M."/>
            <person name="Kim D.-J."/>
            <person name="Klee K."/>
            <person name="Lai H."/>
            <person name="Lang C."/>
            <person name="Lin S."/>
            <person name="Macmil S.L."/>
            <person name="Magdelenat G."/>
            <person name="Matthews L."/>
            <person name="McCorrison J."/>
            <person name="Monaghan E.L."/>
            <person name="Mun J.-H."/>
            <person name="Najar F.Z."/>
            <person name="Nicholson C."/>
            <person name="Noirot C."/>
            <person name="O'Bleness M."/>
            <person name="Paule C.R."/>
            <person name="Poulain J."/>
            <person name="Prion F."/>
            <person name="Qin B."/>
            <person name="Qu C."/>
            <person name="Retzel E.F."/>
            <person name="Riddle C."/>
            <person name="Sallet E."/>
            <person name="Samain S."/>
            <person name="Samson N."/>
            <person name="Sanders I."/>
            <person name="Saurat O."/>
            <person name="Scarpelli C."/>
            <person name="Schiex T."/>
            <person name="Segurens B."/>
            <person name="Severin A.J."/>
            <person name="Sherrier D.J."/>
            <person name="Shi R."/>
            <person name="Sims S."/>
            <person name="Singer S.R."/>
            <person name="Sinharoy S."/>
            <person name="Sterck L."/>
            <person name="Viollet A."/>
            <person name="Wang B.-B."/>
            <person name="Wang K."/>
            <person name="Wang M."/>
            <person name="Wang X."/>
            <person name="Warfsmann J."/>
            <person name="Weissenbach J."/>
            <person name="White D.D."/>
            <person name="White J.D."/>
            <person name="Wiley G.B."/>
            <person name="Wincker P."/>
            <person name="Xing Y."/>
            <person name="Yang L."/>
            <person name="Yao Z."/>
            <person name="Ying F."/>
            <person name="Zhai J."/>
            <person name="Zhou L."/>
            <person name="Zuber A."/>
            <person name="Denarie J."/>
            <person name="Dixon R.A."/>
            <person name="May G.D."/>
            <person name="Schwartz D.C."/>
            <person name="Rogers J."/>
            <person name="Quetier F."/>
            <person name="Town C.D."/>
            <person name="Roe B.A."/>
        </authorList>
    </citation>
    <scope>NUCLEOTIDE SEQUENCE [LARGE SCALE GENOMIC DNA]</scope>
    <source>
        <strain>cv. Jemalong A17</strain>
    </source>
</reference>
<reference key="2">
    <citation type="journal article" date="2014" name="BMC Genomics">
        <title>An improved genome release (version Mt4.0) for the model legume Medicago truncatula.</title>
        <authorList>
            <person name="Tang H."/>
            <person name="Krishnakumar V."/>
            <person name="Bidwell S."/>
            <person name="Rosen B."/>
            <person name="Chan A."/>
            <person name="Zhou S."/>
            <person name="Gentzbittel L."/>
            <person name="Childs K.L."/>
            <person name="Yandell M."/>
            <person name="Gundlach H."/>
            <person name="Mayer K.F."/>
            <person name="Schwartz D.C."/>
            <person name="Town C.D."/>
        </authorList>
    </citation>
    <scope>GENOME REANNOTATION</scope>
    <source>
        <strain>cv. Jemalong A17</strain>
    </source>
</reference>
<reference key="3">
    <citation type="journal article" date="2003" name="Plant Cell">
        <title>Transcript profiling coupled with spatial expression analyses reveals genes involved in distinct developmental stages of an arbuscular mycorrhizal symbiosis.</title>
        <authorList>
            <person name="Liu J."/>
            <person name="Blaylock L.A."/>
            <person name="Endre G."/>
            <person name="Cho J."/>
            <person name="Town C.D."/>
            <person name="VandenBosch K.A."/>
            <person name="Harrison M.J."/>
        </authorList>
    </citation>
    <scope>NUCLEOTIDE SEQUENCE [MRNA] OF 1-228</scope>
    <scope>INDUCTION BY GLOMUS VERSIFORME</scope>
    <source>
        <strain>cv. Jemalong A17</strain>
    </source>
</reference>
<proteinExistence type="evidence at transcript level"/>
<keyword id="KW-0052">Apoplast</keyword>
<keyword id="KW-0325">Glycoprotein</keyword>
<keyword id="KW-0378">Hydrolase</keyword>
<keyword id="KW-0645">Protease</keyword>
<keyword id="KW-1185">Reference proteome</keyword>
<keyword id="KW-0964">Secreted</keyword>
<keyword id="KW-0720">Serine protease</keyword>
<keyword id="KW-0732">Signal</keyword>
<gene>
    <name evidence="7" type="primary">SBT</name>
    <name evidence="9" type="ordered locus">MTR_5g011320</name>
</gene>
<organism>
    <name type="scientific">Medicago truncatula</name>
    <name type="common">Barrel medic</name>
    <name type="synonym">Medicago tribuloides</name>
    <dbReference type="NCBI Taxonomy" id="3880"/>
    <lineage>
        <taxon>Eukaryota</taxon>
        <taxon>Viridiplantae</taxon>
        <taxon>Streptophyta</taxon>
        <taxon>Embryophyta</taxon>
        <taxon>Tracheophyta</taxon>
        <taxon>Spermatophyta</taxon>
        <taxon>Magnoliopsida</taxon>
        <taxon>eudicotyledons</taxon>
        <taxon>Gunneridae</taxon>
        <taxon>Pentapetalae</taxon>
        <taxon>rosids</taxon>
        <taxon>fabids</taxon>
        <taxon>Fabales</taxon>
        <taxon>Fabaceae</taxon>
        <taxon>Papilionoideae</taxon>
        <taxon>50 kb inversion clade</taxon>
        <taxon>NPAAA clade</taxon>
        <taxon>Hologalegina</taxon>
        <taxon>IRL clade</taxon>
        <taxon>Trifolieae</taxon>
        <taxon>Medicago</taxon>
    </lineage>
</organism>
<comment type="function">
    <text evidence="1">Required for arbuscular mycorrhiza (AM) development during AM symbiosis with AM fungi (e.g. Glomeromycota intraradices).</text>
</comment>
<comment type="subcellular location">
    <subcellularLocation>
        <location evidence="1">Secreted</location>
        <location evidence="1">Extracellular space</location>
        <location evidence="1">Apoplast</location>
    </subcellularLocation>
    <text evidence="1">Accumulates in the intercellular spaces and the periarbuscular space (PAS) during arbuscular mycorrhizal (AM) symbiosis.</text>
</comment>
<comment type="induction">
    <text evidence="6">Accumulates in mycorrhizal roots upon colonization by the arbuscular mycorrhiza (AM) fungus Glomus versiforme.</text>
</comment>
<comment type="similarity">
    <text evidence="4">Belongs to the peptidase S8 family.</text>
</comment>
<evidence type="ECO:0000250" key="1">
    <source>
        <dbReference type="UniProtKB" id="A9QY40"/>
    </source>
</evidence>
<evidence type="ECO:0000255" key="2"/>
<evidence type="ECO:0000255" key="3">
    <source>
        <dbReference type="PROSITE-ProRule" id="PRU00498"/>
    </source>
</evidence>
<evidence type="ECO:0000255" key="4">
    <source>
        <dbReference type="PROSITE-ProRule" id="PRU01240"/>
    </source>
</evidence>
<evidence type="ECO:0000255" key="5">
    <source>
        <dbReference type="PROSITE-ProRule" id="PRU10080"/>
    </source>
</evidence>
<evidence type="ECO:0000269" key="6">
    <source>
    </source>
</evidence>
<evidence type="ECO:0000303" key="7">
    <source>
    </source>
</evidence>
<evidence type="ECO:0000305" key="8"/>
<evidence type="ECO:0000312" key="9">
    <source>
        <dbReference type="EMBL" id="AES94154.1"/>
    </source>
</evidence>
<accession>G7KEU7</accession>
<sequence>MMKMELRLLVSLIFILCSISMLAAEENLEHDQINLMTYIVHVKKSENVASHQSEDLHSWYHSFLPQTFPHKERMVFSYRKVASGFAVKLTPEEAKSLQEKGEIVSARPERTLELHTTHTPTFLGLKQGQGLWSDDNLGKGVIIGIIDTGIFPLHPSFNDEGMPPPPAKWKGHCEFTGGQVCNNKLIGARNLVKSAIQEPPFENFFHGTHTAAEAAGRFIEDASVFGNAKGVAAGMAPNAHLAIYKVCNDKIGCTESAILAAMDIAIEDGVDVLSLSLGLGSLPFFEDPIAIGAFAATQNGVFVSCSAANSGPGYSTLSNEAPWILTVGASTIDRKIVASAKLGNGEEYEGETLFQPKDFSQQLLPLVYPGSFGYGNQTQNQSLCLPGSLKNIDLSGKVVLCDVGNVSSIVKGQEVLNSGGIAMILANSEALGFSTFAIAHVLPAVEVSYAAGLTIKSYIKSTYNPTATLIFKGTIIGDSLAPSVVYFSSRGPSQESPGILKPDIIGPGVNILAAWAVSVDNKIPAFDIVSGTSMSCPHLSGIAALIKSSHPDWSPAAIKSAIMTTANTLNLGGIPILDQRLFPADIFATGAGHVNPVKANDPGLVYDIEPEDYVPYLCGLGYSDKEIEVIVQWKVKCSNVKSIPEAQLNYPSFSILLGSDSQYYTRTLTNVGFANSTYKVELEVPLALGMSVNPSEITFTEVNEKVSFSVEFIPQIKENRRNHTFGQGSLTWVSDRHAVRIPISVIFK</sequence>
<name>SBT_MEDTR</name>
<protein>
    <recommendedName>
        <fullName evidence="7">Subtilisin-like protease</fullName>
        <shortName evidence="7">Subtilase</shortName>
        <ecNumber evidence="5">3.4.21.-</ecNumber>
    </recommendedName>
</protein>
<feature type="signal peptide" evidence="2">
    <location>
        <begin position="1"/>
        <end position="24"/>
    </location>
</feature>
<feature type="chain" id="PRO_5014573578" description="Subtilisin-like protease">
    <location>
        <begin position="25"/>
        <end position="748"/>
    </location>
</feature>
<feature type="domain" description="Inhibitor I9" evidence="2">
    <location>
        <begin position="37"/>
        <end position="115"/>
    </location>
</feature>
<feature type="domain" description="Peptidase S8" evidence="4">
    <location>
        <begin position="122"/>
        <end position="600"/>
    </location>
</feature>
<feature type="domain" description="PA" evidence="2">
    <location>
        <begin position="365"/>
        <end position="454"/>
    </location>
</feature>
<feature type="active site" description="Charge relay system" evidence="4">
    <location>
        <position position="147"/>
    </location>
</feature>
<feature type="active site" description="Charge relay system" evidence="4">
    <location>
        <position position="206"/>
    </location>
</feature>
<feature type="active site" description="Charge relay system" evidence="4">
    <location>
        <position position="533"/>
    </location>
</feature>
<feature type="glycosylation site" description="N-linked (GlcNAc...) asparagine" evidence="3">
    <location>
        <position position="376"/>
    </location>
</feature>
<feature type="glycosylation site" description="N-linked (GlcNAc...) asparagine" evidence="3">
    <location>
        <position position="380"/>
    </location>
</feature>
<feature type="glycosylation site" description="N-linked (GlcNAc...) asparagine" evidence="3">
    <location>
        <position position="405"/>
    </location>
</feature>
<feature type="glycosylation site" description="N-linked (GlcNAc...) asparagine" evidence="3">
    <location>
        <position position="675"/>
    </location>
</feature>
<feature type="glycosylation site" description="N-linked (GlcNAc...) asparagine" evidence="3">
    <location>
        <position position="722"/>
    </location>
</feature>
<feature type="sequence conflict" description="In Ref. 3; AW584611." evidence="8" ref="3">
    <original>SV</original>
    <variation>KC</variation>
    <location>
        <begin position="223"/>
        <end position="224"/>
    </location>
</feature>
<dbReference type="EC" id="3.4.21.-" evidence="5"/>
<dbReference type="EMBL" id="CM001221">
    <property type="protein sequence ID" value="AES94154.1"/>
    <property type="molecule type" value="Genomic_DNA"/>
</dbReference>
<dbReference type="EMBL" id="AW584611">
    <property type="status" value="NOT_ANNOTATED_CDS"/>
    <property type="molecule type" value="mRNA"/>
</dbReference>
<dbReference type="RefSeq" id="XP_003611196.1">
    <property type="nucleotide sequence ID" value="XM_003611148.1"/>
</dbReference>
<dbReference type="SMR" id="G7KEU7"/>
<dbReference type="STRING" id="3880.G7KEU7"/>
<dbReference type="GlyCosmos" id="G7KEU7">
    <property type="glycosylation" value="5 sites, No reported glycans"/>
</dbReference>
<dbReference type="PaxDb" id="3880-AES94154"/>
<dbReference type="GeneID" id="11443095"/>
<dbReference type="KEGG" id="mtr:11443095"/>
<dbReference type="eggNOG" id="ENOG502QPQR">
    <property type="taxonomic scope" value="Eukaryota"/>
</dbReference>
<dbReference type="HOGENOM" id="CLU_000625_4_6_1"/>
<dbReference type="OMA" id="RYSPVDM"/>
<dbReference type="OrthoDB" id="206201at2759"/>
<dbReference type="Proteomes" id="UP000002051">
    <property type="component" value="Chromosome 5"/>
</dbReference>
<dbReference type="GO" id="GO:0048046">
    <property type="term" value="C:apoplast"/>
    <property type="evidence" value="ECO:0000250"/>
    <property type="project" value="UniProtKB"/>
</dbReference>
<dbReference type="GO" id="GO:0005615">
    <property type="term" value="C:extracellular space"/>
    <property type="evidence" value="ECO:0000250"/>
    <property type="project" value="UniProtKB"/>
</dbReference>
<dbReference type="GO" id="GO:0004252">
    <property type="term" value="F:serine-type endopeptidase activity"/>
    <property type="evidence" value="ECO:0007669"/>
    <property type="project" value="InterPro"/>
</dbReference>
<dbReference type="GO" id="GO:0036377">
    <property type="term" value="P:arbuscular mycorrhizal association"/>
    <property type="evidence" value="ECO:0000250"/>
    <property type="project" value="UniProtKB"/>
</dbReference>
<dbReference type="GO" id="GO:0006508">
    <property type="term" value="P:proteolysis"/>
    <property type="evidence" value="ECO:0007669"/>
    <property type="project" value="UniProtKB-KW"/>
</dbReference>
<dbReference type="GO" id="GO:0009610">
    <property type="term" value="P:response to symbiotic fungus"/>
    <property type="evidence" value="ECO:0000270"/>
    <property type="project" value="UniProtKB"/>
</dbReference>
<dbReference type="CDD" id="cd02120">
    <property type="entry name" value="PA_subtilisin_like"/>
    <property type="match status" value="1"/>
</dbReference>
<dbReference type="CDD" id="cd04852">
    <property type="entry name" value="Peptidases_S8_3"/>
    <property type="match status" value="1"/>
</dbReference>
<dbReference type="FunFam" id="3.50.30.30:FF:000005">
    <property type="entry name" value="subtilisin-like protease SBT1.5"/>
    <property type="match status" value="1"/>
</dbReference>
<dbReference type="Gene3D" id="2.60.40.2310">
    <property type="match status" value="1"/>
</dbReference>
<dbReference type="Gene3D" id="3.50.30.30">
    <property type="match status" value="1"/>
</dbReference>
<dbReference type="Gene3D" id="3.30.70.80">
    <property type="entry name" value="Peptidase S8 propeptide/proteinase inhibitor I9"/>
    <property type="match status" value="1"/>
</dbReference>
<dbReference type="Gene3D" id="3.40.50.200">
    <property type="entry name" value="Peptidase S8/S53 domain"/>
    <property type="match status" value="1"/>
</dbReference>
<dbReference type="InterPro" id="IPR003137">
    <property type="entry name" value="PA_domain"/>
</dbReference>
<dbReference type="InterPro" id="IPR000209">
    <property type="entry name" value="Peptidase_S8/S53_dom"/>
</dbReference>
<dbReference type="InterPro" id="IPR036852">
    <property type="entry name" value="Peptidase_S8/S53_dom_sf"/>
</dbReference>
<dbReference type="InterPro" id="IPR023827">
    <property type="entry name" value="Peptidase_S8_Asp-AS"/>
</dbReference>
<dbReference type="InterPro" id="IPR015500">
    <property type="entry name" value="Peptidase_S8_subtilisin-rel"/>
</dbReference>
<dbReference type="InterPro" id="IPR034197">
    <property type="entry name" value="Peptidases_S8_3"/>
</dbReference>
<dbReference type="InterPro" id="IPR010259">
    <property type="entry name" value="S8pro/Inhibitor_I9"/>
</dbReference>
<dbReference type="InterPro" id="IPR037045">
    <property type="entry name" value="S8pro/Inhibitor_I9_sf"/>
</dbReference>
<dbReference type="InterPro" id="IPR045051">
    <property type="entry name" value="SBT"/>
</dbReference>
<dbReference type="InterPro" id="IPR041469">
    <property type="entry name" value="Subtilisin-like_FN3"/>
</dbReference>
<dbReference type="PANTHER" id="PTHR10795">
    <property type="entry name" value="PROPROTEIN CONVERTASE SUBTILISIN/KEXIN"/>
    <property type="match status" value="1"/>
</dbReference>
<dbReference type="Pfam" id="PF17766">
    <property type="entry name" value="fn3_6"/>
    <property type="match status" value="1"/>
</dbReference>
<dbReference type="Pfam" id="PF05922">
    <property type="entry name" value="Inhibitor_I9"/>
    <property type="match status" value="1"/>
</dbReference>
<dbReference type="Pfam" id="PF02225">
    <property type="entry name" value="PA"/>
    <property type="match status" value="1"/>
</dbReference>
<dbReference type="Pfam" id="PF00082">
    <property type="entry name" value="Peptidase_S8"/>
    <property type="match status" value="1"/>
</dbReference>
<dbReference type="PRINTS" id="PR00723">
    <property type="entry name" value="SUBTILISIN"/>
</dbReference>
<dbReference type="SUPFAM" id="SSF52743">
    <property type="entry name" value="Subtilisin-like"/>
    <property type="match status" value="1"/>
</dbReference>
<dbReference type="PROSITE" id="PS51892">
    <property type="entry name" value="SUBTILASE"/>
    <property type="match status" value="1"/>
</dbReference>
<dbReference type="PROSITE" id="PS00136">
    <property type="entry name" value="SUBTILASE_ASP"/>
    <property type="match status" value="1"/>
</dbReference>